<dbReference type="EC" id="5.6.2.1" evidence="1"/>
<dbReference type="EMBL" id="BX571856">
    <property type="protein sequence ID" value="CAG41320.1"/>
    <property type="molecule type" value="Genomic_DNA"/>
</dbReference>
<dbReference type="RefSeq" id="WP_000838499.1">
    <property type="nucleotide sequence ID" value="NC_002952.2"/>
</dbReference>
<dbReference type="SMR" id="Q6GEH9"/>
<dbReference type="KEGG" id="sar:SAR2339"/>
<dbReference type="HOGENOM" id="CLU_002929_5_2_9"/>
<dbReference type="Proteomes" id="UP000000596">
    <property type="component" value="Chromosome"/>
</dbReference>
<dbReference type="GO" id="GO:0043597">
    <property type="term" value="C:cytoplasmic replication fork"/>
    <property type="evidence" value="ECO:0007669"/>
    <property type="project" value="TreeGrafter"/>
</dbReference>
<dbReference type="GO" id="GO:0003677">
    <property type="term" value="F:DNA binding"/>
    <property type="evidence" value="ECO:0007669"/>
    <property type="project" value="UniProtKB-KW"/>
</dbReference>
<dbReference type="GO" id="GO:0003917">
    <property type="term" value="F:DNA topoisomerase type I (single strand cut, ATP-independent) activity"/>
    <property type="evidence" value="ECO:0007669"/>
    <property type="project" value="UniProtKB-UniRule"/>
</dbReference>
<dbReference type="GO" id="GO:0000287">
    <property type="term" value="F:magnesium ion binding"/>
    <property type="evidence" value="ECO:0007669"/>
    <property type="project" value="UniProtKB-UniRule"/>
</dbReference>
<dbReference type="GO" id="GO:0006310">
    <property type="term" value="P:DNA recombination"/>
    <property type="evidence" value="ECO:0007669"/>
    <property type="project" value="TreeGrafter"/>
</dbReference>
<dbReference type="GO" id="GO:0006281">
    <property type="term" value="P:DNA repair"/>
    <property type="evidence" value="ECO:0007669"/>
    <property type="project" value="TreeGrafter"/>
</dbReference>
<dbReference type="GO" id="GO:0006265">
    <property type="term" value="P:DNA topological change"/>
    <property type="evidence" value="ECO:0007669"/>
    <property type="project" value="UniProtKB-UniRule"/>
</dbReference>
<dbReference type="CDD" id="cd00186">
    <property type="entry name" value="TOP1Ac"/>
    <property type="match status" value="1"/>
</dbReference>
<dbReference type="CDD" id="cd03362">
    <property type="entry name" value="TOPRIM_TopoIA_TopoIII"/>
    <property type="match status" value="1"/>
</dbReference>
<dbReference type="Gene3D" id="3.40.50.140">
    <property type="match status" value="1"/>
</dbReference>
<dbReference type="Gene3D" id="1.10.460.10">
    <property type="entry name" value="Topoisomerase I, domain 2"/>
    <property type="match status" value="1"/>
</dbReference>
<dbReference type="Gene3D" id="2.70.20.10">
    <property type="entry name" value="Topoisomerase I, domain 3"/>
    <property type="match status" value="1"/>
</dbReference>
<dbReference type="Gene3D" id="1.10.290.10">
    <property type="entry name" value="Topoisomerase I, domain 4"/>
    <property type="match status" value="1"/>
</dbReference>
<dbReference type="HAMAP" id="MF_00953">
    <property type="entry name" value="Topoisom_3_prok"/>
    <property type="match status" value="1"/>
</dbReference>
<dbReference type="InterPro" id="IPR000380">
    <property type="entry name" value="Topo_IA"/>
</dbReference>
<dbReference type="InterPro" id="IPR003601">
    <property type="entry name" value="Topo_IA_2"/>
</dbReference>
<dbReference type="InterPro" id="IPR023406">
    <property type="entry name" value="Topo_IA_AS"/>
</dbReference>
<dbReference type="InterPro" id="IPR013497">
    <property type="entry name" value="Topo_IA_cen"/>
</dbReference>
<dbReference type="InterPro" id="IPR013824">
    <property type="entry name" value="Topo_IA_cen_sub1"/>
</dbReference>
<dbReference type="InterPro" id="IPR013825">
    <property type="entry name" value="Topo_IA_cen_sub2"/>
</dbReference>
<dbReference type="InterPro" id="IPR013826">
    <property type="entry name" value="Topo_IA_cen_sub3"/>
</dbReference>
<dbReference type="InterPro" id="IPR023405">
    <property type="entry name" value="Topo_IA_core_domain"/>
</dbReference>
<dbReference type="InterPro" id="IPR003602">
    <property type="entry name" value="Topo_IA_DNA-bd_dom"/>
</dbReference>
<dbReference type="InterPro" id="IPR005738">
    <property type="entry name" value="TopoIII"/>
</dbReference>
<dbReference type="InterPro" id="IPR006171">
    <property type="entry name" value="TOPRIM_dom"/>
</dbReference>
<dbReference type="InterPro" id="IPR034144">
    <property type="entry name" value="TOPRIM_TopoIII"/>
</dbReference>
<dbReference type="NCBIfam" id="NF005829">
    <property type="entry name" value="PRK07726.1"/>
    <property type="match status" value="1"/>
</dbReference>
<dbReference type="NCBIfam" id="TIGR01056">
    <property type="entry name" value="topB"/>
    <property type="match status" value="1"/>
</dbReference>
<dbReference type="PANTHER" id="PTHR11390:SF21">
    <property type="entry name" value="DNA TOPOISOMERASE 3-ALPHA"/>
    <property type="match status" value="1"/>
</dbReference>
<dbReference type="PANTHER" id="PTHR11390">
    <property type="entry name" value="PROKARYOTIC DNA TOPOISOMERASE"/>
    <property type="match status" value="1"/>
</dbReference>
<dbReference type="Pfam" id="PF01131">
    <property type="entry name" value="Topoisom_bac"/>
    <property type="match status" value="1"/>
</dbReference>
<dbReference type="Pfam" id="PF01751">
    <property type="entry name" value="Toprim"/>
    <property type="match status" value="1"/>
</dbReference>
<dbReference type="PRINTS" id="PR00417">
    <property type="entry name" value="PRTPISMRASEI"/>
</dbReference>
<dbReference type="SMART" id="SM00437">
    <property type="entry name" value="TOP1Ac"/>
    <property type="match status" value="1"/>
</dbReference>
<dbReference type="SMART" id="SM00436">
    <property type="entry name" value="TOP1Bc"/>
    <property type="match status" value="1"/>
</dbReference>
<dbReference type="SMART" id="SM00493">
    <property type="entry name" value="TOPRIM"/>
    <property type="match status" value="1"/>
</dbReference>
<dbReference type="SUPFAM" id="SSF56712">
    <property type="entry name" value="Prokaryotic type I DNA topoisomerase"/>
    <property type="match status" value="1"/>
</dbReference>
<dbReference type="PROSITE" id="PS00396">
    <property type="entry name" value="TOPO_IA_1"/>
    <property type="match status" value="1"/>
</dbReference>
<dbReference type="PROSITE" id="PS52039">
    <property type="entry name" value="TOPO_IA_2"/>
    <property type="match status" value="1"/>
</dbReference>
<dbReference type="PROSITE" id="PS50880">
    <property type="entry name" value="TOPRIM"/>
    <property type="match status" value="1"/>
</dbReference>
<gene>
    <name evidence="1" type="primary">topB</name>
    <name type="ordered locus">SAR2339</name>
</gene>
<reference key="1">
    <citation type="journal article" date="2004" name="Proc. Natl. Acad. Sci. U.S.A.">
        <title>Complete genomes of two clinical Staphylococcus aureus strains: evidence for the rapid evolution of virulence and drug resistance.</title>
        <authorList>
            <person name="Holden M.T.G."/>
            <person name="Feil E.J."/>
            <person name="Lindsay J.A."/>
            <person name="Peacock S.J."/>
            <person name="Day N.P.J."/>
            <person name="Enright M.C."/>
            <person name="Foster T.J."/>
            <person name="Moore C.E."/>
            <person name="Hurst L."/>
            <person name="Atkin R."/>
            <person name="Barron A."/>
            <person name="Bason N."/>
            <person name="Bentley S.D."/>
            <person name="Chillingworth C."/>
            <person name="Chillingworth T."/>
            <person name="Churcher C."/>
            <person name="Clark L."/>
            <person name="Corton C."/>
            <person name="Cronin A."/>
            <person name="Doggett J."/>
            <person name="Dowd L."/>
            <person name="Feltwell T."/>
            <person name="Hance Z."/>
            <person name="Harris B."/>
            <person name="Hauser H."/>
            <person name="Holroyd S."/>
            <person name="Jagels K."/>
            <person name="James K.D."/>
            <person name="Lennard N."/>
            <person name="Line A."/>
            <person name="Mayes R."/>
            <person name="Moule S."/>
            <person name="Mungall K."/>
            <person name="Ormond D."/>
            <person name="Quail M.A."/>
            <person name="Rabbinowitsch E."/>
            <person name="Rutherford K.M."/>
            <person name="Sanders M."/>
            <person name="Sharp S."/>
            <person name="Simmonds M."/>
            <person name="Stevens K."/>
            <person name="Whitehead S."/>
            <person name="Barrell B.G."/>
            <person name="Spratt B.G."/>
            <person name="Parkhill J."/>
        </authorList>
    </citation>
    <scope>NUCLEOTIDE SEQUENCE [LARGE SCALE GENOMIC DNA]</scope>
    <source>
        <strain>MRSA252</strain>
    </source>
</reference>
<accession>Q6GEH9</accession>
<keyword id="KW-0238">DNA-binding</keyword>
<keyword id="KW-0413">Isomerase</keyword>
<keyword id="KW-0460">Magnesium</keyword>
<keyword id="KW-0479">Metal-binding</keyword>
<keyword id="KW-0799">Topoisomerase</keyword>
<name>TOP3_STAAR</name>
<protein>
    <recommendedName>
        <fullName evidence="1">DNA topoisomerase 3</fullName>
        <ecNumber evidence="1">5.6.2.1</ecNumber>
    </recommendedName>
    <alternativeName>
        <fullName evidence="1">DNA topoisomerase III</fullName>
    </alternativeName>
</protein>
<sequence>MKSLILAEKPSVARDIADALQINQKRNGYFENNQYIVTWALGHLVTNATPEQYDKNLKEWRLEDLPIIPKYMKTVVIGKTSKQFKTVKALILDNKVKDIIIATDAGREGELVARLILDKVGNKKPLRRLWISSVTKKAIQQGFKNLKDGRQYNDLYYAALARSEADWIVGINATRALTTKYDAQLSLGRVQTPTIQLVNTRQQEINQFKPQQYYTLSLTVKGFDFQLESNQRYTNKETLEQIVNNLKNVDGKIKSVATKHKKSYPQSLYNLTDLQQDMYRRYKIGPKETLNTLQSLYERHKVVTYPRTDSNYLTTDMVDTMKERIQATMATTYKDQARPLMSKTFSSKMSIFNNQKVSDHHAIIPTEVRPVMSDLSNRELKLYDMIVERFLEALMSPHEYDAITVTLEVAGHTFVLKENVTTVLGFKSIRQGESITEMQQPFSEGDEVKISKTNIREHETTPPEYFNEGSLLKAMENPQNFIQLKDKKYAQTLKQTGGIGTVATRADIIDKLFNMNAIESRDGKIKVTSKGKQILELAPEELTSPLLTAQWEEKLLLIERGKYQAKTFINEMKDFTKDVVNGIKNSDRKYKHDNLTTTECPTCGKFMIKVKTKNGQMLVCQDPSCKTKKNVQRKTNARCPNCKKKLTLFGKGKEAVYRCVCGHSETQAHMDQRMKSKSSGKVSRKEMKKYMNKNEGLDNNPFKDALKNLNL</sequence>
<evidence type="ECO:0000255" key="1">
    <source>
        <dbReference type="HAMAP-Rule" id="MF_00953"/>
    </source>
</evidence>
<evidence type="ECO:0000255" key="2">
    <source>
        <dbReference type="PROSITE-ProRule" id="PRU01383"/>
    </source>
</evidence>
<evidence type="ECO:0000256" key="3">
    <source>
        <dbReference type="SAM" id="MobiDB-lite"/>
    </source>
</evidence>
<organism>
    <name type="scientific">Staphylococcus aureus (strain MRSA252)</name>
    <dbReference type="NCBI Taxonomy" id="282458"/>
    <lineage>
        <taxon>Bacteria</taxon>
        <taxon>Bacillati</taxon>
        <taxon>Bacillota</taxon>
        <taxon>Bacilli</taxon>
        <taxon>Bacillales</taxon>
        <taxon>Staphylococcaceae</taxon>
        <taxon>Staphylococcus</taxon>
    </lineage>
</organism>
<proteinExistence type="inferred from homology"/>
<feature type="chain" id="PRO_0000286373" description="DNA topoisomerase 3">
    <location>
        <begin position="1"/>
        <end position="711"/>
    </location>
</feature>
<feature type="domain" description="Toprim" evidence="1">
    <location>
        <begin position="2"/>
        <end position="135"/>
    </location>
</feature>
<feature type="domain" description="Topo IA-type catalytic" evidence="2">
    <location>
        <begin position="152"/>
        <end position="580"/>
    </location>
</feature>
<feature type="region of interest" description="Interaction with DNA" evidence="1">
    <location>
        <begin position="186"/>
        <end position="191"/>
    </location>
</feature>
<feature type="region of interest" description="Disordered" evidence="3">
    <location>
        <begin position="691"/>
        <end position="711"/>
    </location>
</feature>
<feature type="active site" description="O-(5'-phospho-DNA)-tyrosine intermediate" evidence="2">
    <location>
        <position position="305"/>
    </location>
</feature>
<feature type="binding site" evidence="1">
    <location>
        <position position="8"/>
    </location>
    <ligand>
        <name>Mg(2+)</name>
        <dbReference type="ChEBI" id="CHEBI:18420"/>
        <note>catalytic</note>
    </ligand>
</feature>
<feature type="binding site" evidence="1">
    <location>
        <position position="104"/>
    </location>
    <ligand>
        <name>Mg(2+)</name>
        <dbReference type="ChEBI" id="CHEBI:18420"/>
        <note>catalytic</note>
    </ligand>
</feature>
<feature type="site" description="Interaction with DNA" evidence="1">
    <location>
        <position position="60"/>
    </location>
</feature>
<feature type="site" description="Interaction with DNA" evidence="1">
    <location>
        <position position="167"/>
    </location>
</feature>
<feature type="site" description="Interaction with DNA" evidence="1">
    <location>
        <position position="175"/>
    </location>
</feature>
<feature type="site" description="Interaction with DNA" evidence="1">
    <location>
        <position position="307"/>
    </location>
</feature>
<comment type="function">
    <text evidence="1">Releases the supercoiling and torsional tension of DNA, which is introduced during the DNA replication and transcription, by transiently cleaving and rejoining one strand of the DNA duplex. Introduces a single-strand break via transesterification at a target site in duplex DNA. The scissile phosphodiester is attacked by the catalytic tyrosine of the enzyme, resulting in the formation of a DNA-(5'-phosphotyrosyl)-enzyme intermediate and the expulsion of a 3'-OH DNA strand. The free DNA strand then undergoes passage around the unbroken strand, thus removing DNA supercoils. Finally, in the religation step, the DNA 3'-OH attacks the covalent intermediate to expel the active-site tyrosine and restore the DNA phosphodiester backbone.</text>
</comment>
<comment type="catalytic activity">
    <reaction evidence="1">
        <text>ATP-independent breakage of single-stranded DNA, followed by passage and rejoining.</text>
        <dbReference type="EC" id="5.6.2.1"/>
    </reaction>
</comment>
<comment type="cofactor">
    <cofactor evidence="1">
        <name>Mg(2+)</name>
        <dbReference type="ChEBI" id="CHEBI:18420"/>
    </cofactor>
</comment>
<comment type="similarity">
    <text evidence="1 2">Belongs to the type IA topoisomerase family.</text>
</comment>